<evidence type="ECO:0000255" key="1">
    <source>
        <dbReference type="HAMAP-Rule" id="MF_00017"/>
    </source>
</evidence>
<reference key="1">
    <citation type="journal article" date="2007" name="Science">
        <title>Legumes symbioses: absence of nod genes in photosynthetic bradyrhizobia.</title>
        <authorList>
            <person name="Giraud E."/>
            <person name="Moulin L."/>
            <person name="Vallenet D."/>
            <person name="Barbe V."/>
            <person name="Cytryn E."/>
            <person name="Avarre J.-C."/>
            <person name="Jaubert M."/>
            <person name="Simon D."/>
            <person name="Cartieaux F."/>
            <person name="Prin Y."/>
            <person name="Bena G."/>
            <person name="Hannibal L."/>
            <person name="Fardoux J."/>
            <person name="Kojadinovic M."/>
            <person name="Vuillet L."/>
            <person name="Lajus A."/>
            <person name="Cruveiller S."/>
            <person name="Rouy Z."/>
            <person name="Mangenot S."/>
            <person name="Segurens B."/>
            <person name="Dossat C."/>
            <person name="Franck W.L."/>
            <person name="Chang W.-S."/>
            <person name="Saunders E."/>
            <person name="Bruce D."/>
            <person name="Richardson P."/>
            <person name="Normand P."/>
            <person name="Dreyfus B."/>
            <person name="Pignol D."/>
            <person name="Stacey G."/>
            <person name="Emerich D."/>
            <person name="Vermeglio A."/>
            <person name="Medigue C."/>
            <person name="Sadowsky M."/>
        </authorList>
    </citation>
    <scope>NUCLEOTIDE SEQUENCE [LARGE SCALE GENOMIC DNA]</scope>
    <source>
        <strain>ORS 278</strain>
    </source>
</reference>
<organism>
    <name type="scientific">Bradyrhizobium sp. (strain ORS 278)</name>
    <dbReference type="NCBI Taxonomy" id="114615"/>
    <lineage>
        <taxon>Bacteria</taxon>
        <taxon>Pseudomonadati</taxon>
        <taxon>Pseudomonadota</taxon>
        <taxon>Alphaproteobacteria</taxon>
        <taxon>Hyphomicrobiales</taxon>
        <taxon>Nitrobacteraceae</taxon>
        <taxon>Bradyrhizobium</taxon>
    </lineage>
</organism>
<accession>A4YLB4</accession>
<name>RECR_BRASO</name>
<gene>
    <name evidence="1" type="primary">recR</name>
    <name type="ordered locus">BRADO0765</name>
</gene>
<sequence length="199" mass="21326">MAVAGPEIERLIQLLARLPGLGPRSARRAALHLIKKREALMVPLASALQVAIDRIQVCKTCGNIDTQSPCTVCTDPRRDPAMIVVVADVADLWALERAKASNGRYHVLGGTLSPLDGVGPQDLTIDALVQRAHAPEVSEIILALNATVDGQTTAHYITDLLQEANVKVTRLAHGVPVGGELDYLDEGTLSAAMRQRTLF</sequence>
<proteinExistence type="inferred from homology"/>
<protein>
    <recommendedName>
        <fullName evidence="1">Recombination protein RecR</fullName>
    </recommendedName>
</protein>
<feature type="chain" id="PRO_0000322865" description="Recombination protein RecR">
    <location>
        <begin position="1"/>
        <end position="199"/>
    </location>
</feature>
<feature type="domain" description="Toprim" evidence="1">
    <location>
        <begin position="81"/>
        <end position="176"/>
    </location>
</feature>
<feature type="zinc finger region" description="C4-type" evidence="1">
    <location>
        <begin position="58"/>
        <end position="73"/>
    </location>
</feature>
<comment type="function">
    <text evidence="1">May play a role in DNA repair. It seems to be involved in an RecBC-independent recombinational process of DNA repair. It may act with RecF and RecO.</text>
</comment>
<comment type="similarity">
    <text evidence="1">Belongs to the RecR family.</text>
</comment>
<keyword id="KW-0227">DNA damage</keyword>
<keyword id="KW-0233">DNA recombination</keyword>
<keyword id="KW-0234">DNA repair</keyword>
<keyword id="KW-0479">Metal-binding</keyword>
<keyword id="KW-1185">Reference proteome</keyword>
<keyword id="KW-0862">Zinc</keyword>
<keyword id="KW-0863">Zinc-finger</keyword>
<dbReference type="EMBL" id="CU234118">
    <property type="protein sequence ID" value="CAL74690.1"/>
    <property type="molecule type" value="Genomic_DNA"/>
</dbReference>
<dbReference type="RefSeq" id="WP_008964175.1">
    <property type="nucleotide sequence ID" value="NC_009445.1"/>
</dbReference>
<dbReference type="SMR" id="A4YLB4"/>
<dbReference type="STRING" id="114615.BRADO0765"/>
<dbReference type="KEGG" id="bra:BRADO0765"/>
<dbReference type="eggNOG" id="COG0353">
    <property type="taxonomic scope" value="Bacteria"/>
</dbReference>
<dbReference type="HOGENOM" id="CLU_060739_1_1_5"/>
<dbReference type="OrthoDB" id="9802672at2"/>
<dbReference type="Proteomes" id="UP000001994">
    <property type="component" value="Chromosome"/>
</dbReference>
<dbReference type="GO" id="GO:0003677">
    <property type="term" value="F:DNA binding"/>
    <property type="evidence" value="ECO:0007669"/>
    <property type="project" value="UniProtKB-UniRule"/>
</dbReference>
<dbReference type="GO" id="GO:0008270">
    <property type="term" value="F:zinc ion binding"/>
    <property type="evidence" value="ECO:0007669"/>
    <property type="project" value="UniProtKB-KW"/>
</dbReference>
<dbReference type="GO" id="GO:0006310">
    <property type="term" value="P:DNA recombination"/>
    <property type="evidence" value="ECO:0007669"/>
    <property type="project" value="UniProtKB-UniRule"/>
</dbReference>
<dbReference type="GO" id="GO:0006281">
    <property type="term" value="P:DNA repair"/>
    <property type="evidence" value="ECO:0007669"/>
    <property type="project" value="UniProtKB-UniRule"/>
</dbReference>
<dbReference type="CDD" id="cd01025">
    <property type="entry name" value="TOPRIM_recR"/>
    <property type="match status" value="1"/>
</dbReference>
<dbReference type="Gene3D" id="3.40.1360.10">
    <property type="match status" value="1"/>
</dbReference>
<dbReference type="Gene3D" id="6.10.250.240">
    <property type="match status" value="1"/>
</dbReference>
<dbReference type="Gene3D" id="1.10.8.420">
    <property type="entry name" value="RecR Domain 1"/>
    <property type="match status" value="1"/>
</dbReference>
<dbReference type="HAMAP" id="MF_00017">
    <property type="entry name" value="RecR"/>
    <property type="match status" value="1"/>
</dbReference>
<dbReference type="InterPro" id="IPR000093">
    <property type="entry name" value="DNA_Rcmb_RecR"/>
</dbReference>
<dbReference type="InterPro" id="IPR023627">
    <property type="entry name" value="Rcmb_RecR"/>
</dbReference>
<dbReference type="InterPro" id="IPR015967">
    <property type="entry name" value="Rcmb_RecR_Znf"/>
</dbReference>
<dbReference type="InterPro" id="IPR006171">
    <property type="entry name" value="TOPRIM_dom"/>
</dbReference>
<dbReference type="InterPro" id="IPR034137">
    <property type="entry name" value="TOPRIM_RecR"/>
</dbReference>
<dbReference type="NCBIfam" id="TIGR00615">
    <property type="entry name" value="recR"/>
    <property type="match status" value="1"/>
</dbReference>
<dbReference type="PANTHER" id="PTHR30446">
    <property type="entry name" value="RECOMBINATION PROTEIN RECR"/>
    <property type="match status" value="1"/>
</dbReference>
<dbReference type="PANTHER" id="PTHR30446:SF0">
    <property type="entry name" value="RECOMBINATION PROTEIN RECR"/>
    <property type="match status" value="1"/>
</dbReference>
<dbReference type="Pfam" id="PF21175">
    <property type="entry name" value="RecR_C"/>
    <property type="match status" value="1"/>
</dbReference>
<dbReference type="Pfam" id="PF21176">
    <property type="entry name" value="RecR_HhH"/>
    <property type="match status" value="1"/>
</dbReference>
<dbReference type="Pfam" id="PF02132">
    <property type="entry name" value="RecR_ZnF"/>
    <property type="match status" value="1"/>
</dbReference>
<dbReference type="Pfam" id="PF13662">
    <property type="entry name" value="Toprim_4"/>
    <property type="match status" value="1"/>
</dbReference>
<dbReference type="SMART" id="SM00493">
    <property type="entry name" value="TOPRIM"/>
    <property type="match status" value="1"/>
</dbReference>
<dbReference type="SUPFAM" id="SSF111304">
    <property type="entry name" value="Recombination protein RecR"/>
    <property type="match status" value="1"/>
</dbReference>
<dbReference type="PROSITE" id="PS01300">
    <property type="entry name" value="RECR"/>
    <property type="match status" value="1"/>
</dbReference>
<dbReference type="PROSITE" id="PS50880">
    <property type="entry name" value="TOPRIM"/>
    <property type="match status" value="1"/>
</dbReference>